<comment type="function">
    <text evidence="1">Part of the ABC transporter complex ZnuABC involved in zinc import. Responsible for energy coupling to the transport system.</text>
</comment>
<comment type="catalytic activity">
    <reaction evidence="1">
        <text>Zn(2+)(out) + ATP(in) + H2O(in) = Zn(2+)(in) + ADP(in) + phosphate(in) + H(+)(in)</text>
        <dbReference type="Rhea" id="RHEA:29795"/>
        <dbReference type="ChEBI" id="CHEBI:15377"/>
        <dbReference type="ChEBI" id="CHEBI:15378"/>
        <dbReference type="ChEBI" id="CHEBI:29105"/>
        <dbReference type="ChEBI" id="CHEBI:30616"/>
        <dbReference type="ChEBI" id="CHEBI:43474"/>
        <dbReference type="ChEBI" id="CHEBI:456216"/>
        <dbReference type="EC" id="7.2.2.20"/>
    </reaction>
</comment>
<comment type="subunit">
    <text evidence="1">The complex is composed of two ATP-binding proteins (ZnuC), two transmembrane proteins (ZnuB) and a solute-binding protein (ZnuA).</text>
</comment>
<comment type="subcellular location">
    <subcellularLocation>
        <location evidence="1">Cell inner membrane</location>
        <topology evidence="1">Peripheral membrane protein</topology>
    </subcellularLocation>
</comment>
<comment type="similarity">
    <text evidence="1">Belongs to the ABC transporter superfamily. Zinc importer (TC 3.A.1.15.5) family.</text>
</comment>
<proteinExistence type="inferred from homology"/>
<gene>
    <name evidence="1" type="primary">znuC</name>
    <name type="ordered locus">UTI89_C2062</name>
</gene>
<name>ZNUC_ECOUT</name>
<dbReference type="EC" id="7.2.2.20" evidence="1"/>
<dbReference type="EMBL" id="CP000243">
    <property type="protein sequence ID" value="ABE07538.1"/>
    <property type="molecule type" value="Genomic_DNA"/>
</dbReference>
<dbReference type="RefSeq" id="WP_000202996.1">
    <property type="nucleotide sequence ID" value="NZ_CP064825.1"/>
</dbReference>
<dbReference type="SMR" id="Q1RAS6"/>
<dbReference type="GeneID" id="93776132"/>
<dbReference type="KEGG" id="eci:UTI89_C2062"/>
<dbReference type="HOGENOM" id="CLU_000604_1_11_6"/>
<dbReference type="Proteomes" id="UP000001952">
    <property type="component" value="Chromosome"/>
</dbReference>
<dbReference type="GO" id="GO:0005886">
    <property type="term" value="C:plasma membrane"/>
    <property type="evidence" value="ECO:0007669"/>
    <property type="project" value="UniProtKB-SubCell"/>
</dbReference>
<dbReference type="GO" id="GO:0015633">
    <property type="term" value="F:ABC-type zinc transporter activity"/>
    <property type="evidence" value="ECO:0007669"/>
    <property type="project" value="UniProtKB-EC"/>
</dbReference>
<dbReference type="GO" id="GO:0005524">
    <property type="term" value="F:ATP binding"/>
    <property type="evidence" value="ECO:0007669"/>
    <property type="project" value="UniProtKB-KW"/>
</dbReference>
<dbReference type="GO" id="GO:0016887">
    <property type="term" value="F:ATP hydrolysis activity"/>
    <property type="evidence" value="ECO:0007669"/>
    <property type="project" value="InterPro"/>
</dbReference>
<dbReference type="GO" id="GO:0010043">
    <property type="term" value="P:response to zinc ion"/>
    <property type="evidence" value="ECO:0007669"/>
    <property type="project" value="TreeGrafter"/>
</dbReference>
<dbReference type="CDD" id="cd03235">
    <property type="entry name" value="ABC_Metallic_Cations"/>
    <property type="match status" value="1"/>
</dbReference>
<dbReference type="FunFam" id="3.40.50.300:FF:000392">
    <property type="entry name" value="Zinc import ATP-binding protein ZnuC"/>
    <property type="match status" value="1"/>
</dbReference>
<dbReference type="Gene3D" id="3.40.50.300">
    <property type="entry name" value="P-loop containing nucleotide triphosphate hydrolases"/>
    <property type="match status" value="1"/>
</dbReference>
<dbReference type="InterPro" id="IPR003593">
    <property type="entry name" value="AAA+_ATPase"/>
</dbReference>
<dbReference type="InterPro" id="IPR003439">
    <property type="entry name" value="ABC_transporter-like_ATP-bd"/>
</dbReference>
<dbReference type="InterPro" id="IPR050153">
    <property type="entry name" value="Metal_Ion_Import_ABC"/>
</dbReference>
<dbReference type="InterPro" id="IPR027417">
    <property type="entry name" value="P-loop_NTPase"/>
</dbReference>
<dbReference type="NCBIfam" id="NF007090">
    <property type="entry name" value="PRK09544.1"/>
    <property type="match status" value="1"/>
</dbReference>
<dbReference type="PANTHER" id="PTHR42734">
    <property type="entry name" value="METAL TRANSPORT SYSTEM ATP-BINDING PROTEIN TM_0124-RELATED"/>
    <property type="match status" value="1"/>
</dbReference>
<dbReference type="PANTHER" id="PTHR42734:SF9">
    <property type="entry name" value="ZINC IMPORT ATP-BINDING PROTEIN ZNUC"/>
    <property type="match status" value="1"/>
</dbReference>
<dbReference type="Pfam" id="PF00005">
    <property type="entry name" value="ABC_tran"/>
    <property type="match status" value="1"/>
</dbReference>
<dbReference type="SMART" id="SM00382">
    <property type="entry name" value="AAA"/>
    <property type="match status" value="1"/>
</dbReference>
<dbReference type="SUPFAM" id="SSF52540">
    <property type="entry name" value="P-loop containing nucleoside triphosphate hydrolases"/>
    <property type="match status" value="1"/>
</dbReference>
<dbReference type="PROSITE" id="PS50893">
    <property type="entry name" value="ABC_TRANSPORTER_2"/>
    <property type="match status" value="1"/>
</dbReference>
<dbReference type="PROSITE" id="PS51298">
    <property type="entry name" value="ZNUC"/>
    <property type="match status" value="1"/>
</dbReference>
<accession>Q1RAS6</accession>
<feature type="chain" id="PRO_0000281505" description="Zinc import ATP-binding protein ZnuC">
    <location>
        <begin position="1"/>
        <end position="251"/>
    </location>
</feature>
<feature type="domain" description="ABC transporter" evidence="1">
    <location>
        <begin position="5"/>
        <end position="220"/>
    </location>
</feature>
<feature type="binding site" evidence="1">
    <location>
        <begin position="37"/>
        <end position="44"/>
    </location>
    <ligand>
        <name>ATP</name>
        <dbReference type="ChEBI" id="CHEBI:30616"/>
    </ligand>
</feature>
<evidence type="ECO:0000255" key="1">
    <source>
        <dbReference type="HAMAP-Rule" id="MF_01725"/>
    </source>
</evidence>
<protein>
    <recommendedName>
        <fullName evidence="1">Zinc import ATP-binding protein ZnuC</fullName>
        <ecNumber evidence="1">7.2.2.20</ecNumber>
    </recommendedName>
</protein>
<organism>
    <name type="scientific">Escherichia coli (strain UTI89 / UPEC)</name>
    <dbReference type="NCBI Taxonomy" id="364106"/>
    <lineage>
        <taxon>Bacteria</taxon>
        <taxon>Pseudomonadati</taxon>
        <taxon>Pseudomonadota</taxon>
        <taxon>Gammaproteobacteria</taxon>
        <taxon>Enterobacterales</taxon>
        <taxon>Enterobacteriaceae</taxon>
        <taxon>Escherichia</taxon>
    </lineage>
</organism>
<keyword id="KW-0067">ATP-binding</keyword>
<keyword id="KW-0997">Cell inner membrane</keyword>
<keyword id="KW-1003">Cell membrane</keyword>
<keyword id="KW-0406">Ion transport</keyword>
<keyword id="KW-0472">Membrane</keyword>
<keyword id="KW-0547">Nucleotide-binding</keyword>
<keyword id="KW-1278">Translocase</keyword>
<keyword id="KW-0813">Transport</keyword>
<keyword id="KW-0862">Zinc</keyword>
<keyword id="KW-0864">Zinc transport</keyword>
<reference key="1">
    <citation type="journal article" date="2006" name="Proc. Natl. Acad. Sci. U.S.A.">
        <title>Identification of genes subject to positive selection in uropathogenic strains of Escherichia coli: a comparative genomics approach.</title>
        <authorList>
            <person name="Chen S.L."/>
            <person name="Hung C.-S."/>
            <person name="Xu J."/>
            <person name="Reigstad C.S."/>
            <person name="Magrini V."/>
            <person name="Sabo A."/>
            <person name="Blasiar D."/>
            <person name="Bieri T."/>
            <person name="Meyer R.R."/>
            <person name="Ozersky P."/>
            <person name="Armstrong J.R."/>
            <person name="Fulton R.S."/>
            <person name="Latreille J.P."/>
            <person name="Spieth J."/>
            <person name="Hooton T.M."/>
            <person name="Mardis E.R."/>
            <person name="Hultgren S.J."/>
            <person name="Gordon J.I."/>
        </authorList>
    </citation>
    <scope>NUCLEOTIDE SEQUENCE [LARGE SCALE GENOMIC DNA]</scope>
    <source>
        <strain>UTI89 / UPEC</strain>
    </source>
</reference>
<sequence>MTSLVSLENVSVSFGQRRVLSDVSLELKPGKILTLLGPNGAGKSTLVRVVLGLVTPDEGVIKRNGKLRIGYVPQKLYLDTTLPLTVNRFLRLRPGTHKEDILPALKRVQAGHLINAPMQKLSGGETQRVLLARALLNRPQLLVLDEPTQGVDVNGQVALYDLIDQLRRELDCGVLMVSHDLHLVMAKTDEVLCLNHHICCSGTPEVVSLHPEFISMFGPRGAEQLGIYRHHHNHRHDLQGRIVLRRGNDRS</sequence>